<protein>
    <recommendedName>
        <fullName evidence="1">Large ribosomal subunit protein bL25</fullName>
    </recommendedName>
    <alternativeName>
        <fullName evidence="2">50S ribosomal protein L25</fullName>
    </alternativeName>
    <alternativeName>
        <fullName evidence="1">General stress protein CTC</fullName>
    </alternativeName>
</protein>
<comment type="function">
    <text evidence="1">This is one of the proteins that binds to the 5S RNA in the ribosome where it forms part of the central protuberance.</text>
</comment>
<comment type="subunit">
    <text evidence="1">Part of the 50S ribosomal subunit; part of the 5S rRNA/L5/L18/L25 subcomplex. Contacts the 5S rRNA. Binds to the 5S rRNA independently of L5 and L18.</text>
</comment>
<comment type="similarity">
    <text evidence="1">Belongs to the bacterial ribosomal protein bL25 family. CTC subfamily.</text>
</comment>
<keyword id="KW-0687">Ribonucleoprotein</keyword>
<keyword id="KW-0689">Ribosomal protein</keyword>
<keyword id="KW-0694">RNA-binding</keyword>
<keyword id="KW-0699">rRNA-binding</keyword>
<organism>
    <name type="scientific">Leptospira interrogans serogroup Icterohaemorrhagiae serovar copenhageni (strain Fiocruz L1-130)</name>
    <dbReference type="NCBI Taxonomy" id="267671"/>
    <lineage>
        <taxon>Bacteria</taxon>
        <taxon>Pseudomonadati</taxon>
        <taxon>Spirochaetota</taxon>
        <taxon>Spirochaetia</taxon>
        <taxon>Leptospirales</taxon>
        <taxon>Leptospiraceae</taxon>
        <taxon>Leptospira</taxon>
    </lineage>
</organism>
<gene>
    <name evidence="1" type="primary">rplY</name>
    <name evidence="1" type="synonym">ctc</name>
    <name type="ordered locus">LIC_10430</name>
</gene>
<name>RL25_LEPIC</name>
<accession>Q72V72</accession>
<sequence>MSQNTIHKIAVKKRTTTGKNENNRLRSSGMVPVNIIGGGVATSGAVNEKELEKMVHSGIRQSTLIELDVEGQGAQKVFVKEIQRFPEIDRIRHVDFYKVVPGQKIVTKIGIETTGIAKGSKTGGQFEHIIHEIRVKTIPEDLLENLTIDVTDLDVGDSIKISQLKVPTSWEILINGDPIVTSVNKTKALLAAERAEAKGSAADDAKAKKGKK</sequence>
<feature type="chain" id="PRO_0000181561" description="Large ribosomal subunit protein bL25">
    <location>
        <begin position="1"/>
        <end position="212"/>
    </location>
</feature>
<dbReference type="EMBL" id="AE016823">
    <property type="protein sequence ID" value="AAS69052.1"/>
    <property type="molecule type" value="Genomic_DNA"/>
</dbReference>
<dbReference type="RefSeq" id="WP_000081487.1">
    <property type="nucleotide sequence ID" value="NC_005823.1"/>
</dbReference>
<dbReference type="SMR" id="Q72V72"/>
<dbReference type="KEGG" id="lic:LIC_10430"/>
<dbReference type="HOGENOM" id="CLU_075939_2_1_12"/>
<dbReference type="Proteomes" id="UP000007037">
    <property type="component" value="Chromosome I"/>
</dbReference>
<dbReference type="GO" id="GO:0022625">
    <property type="term" value="C:cytosolic large ribosomal subunit"/>
    <property type="evidence" value="ECO:0007669"/>
    <property type="project" value="TreeGrafter"/>
</dbReference>
<dbReference type="GO" id="GO:0008097">
    <property type="term" value="F:5S rRNA binding"/>
    <property type="evidence" value="ECO:0007669"/>
    <property type="project" value="InterPro"/>
</dbReference>
<dbReference type="GO" id="GO:0003735">
    <property type="term" value="F:structural constituent of ribosome"/>
    <property type="evidence" value="ECO:0007669"/>
    <property type="project" value="InterPro"/>
</dbReference>
<dbReference type="GO" id="GO:0006412">
    <property type="term" value="P:translation"/>
    <property type="evidence" value="ECO:0007669"/>
    <property type="project" value="UniProtKB-UniRule"/>
</dbReference>
<dbReference type="CDD" id="cd00495">
    <property type="entry name" value="Ribosomal_L25_TL5_CTC"/>
    <property type="match status" value="1"/>
</dbReference>
<dbReference type="FunFam" id="2.40.240.10:FF:000018">
    <property type="entry name" value="50S ribosomal protein L25"/>
    <property type="match status" value="1"/>
</dbReference>
<dbReference type="Gene3D" id="2.170.120.20">
    <property type="entry name" value="Ribosomal protein L25, beta domain"/>
    <property type="match status" value="1"/>
</dbReference>
<dbReference type="Gene3D" id="2.40.240.10">
    <property type="entry name" value="Ribosomal Protein L25, Chain P"/>
    <property type="match status" value="1"/>
</dbReference>
<dbReference type="HAMAP" id="MF_01334">
    <property type="entry name" value="Ribosomal_bL25_CTC"/>
    <property type="match status" value="1"/>
</dbReference>
<dbReference type="InterPro" id="IPR020056">
    <property type="entry name" value="Rbsml_bL25/Gln-tRNA_synth_N"/>
</dbReference>
<dbReference type="InterPro" id="IPR011035">
    <property type="entry name" value="Ribosomal_bL25/Gln-tRNA_synth"/>
</dbReference>
<dbReference type="InterPro" id="IPR020057">
    <property type="entry name" value="Ribosomal_bL25_b-dom"/>
</dbReference>
<dbReference type="InterPro" id="IPR037121">
    <property type="entry name" value="Ribosomal_bL25_C"/>
</dbReference>
<dbReference type="InterPro" id="IPR001021">
    <property type="entry name" value="Ribosomal_bL25_long"/>
</dbReference>
<dbReference type="InterPro" id="IPR029751">
    <property type="entry name" value="Ribosomal_L25_dom"/>
</dbReference>
<dbReference type="InterPro" id="IPR020930">
    <property type="entry name" value="Ribosomal_uL5_bac-type"/>
</dbReference>
<dbReference type="NCBIfam" id="TIGR00731">
    <property type="entry name" value="bL25_bact_ctc"/>
    <property type="match status" value="1"/>
</dbReference>
<dbReference type="NCBIfam" id="NF004136">
    <property type="entry name" value="PRK05618.3-2"/>
    <property type="match status" value="1"/>
</dbReference>
<dbReference type="PANTHER" id="PTHR33284">
    <property type="entry name" value="RIBOSOMAL PROTEIN L25/GLN-TRNA SYNTHETASE, ANTI-CODON-BINDING DOMAIN-CONTAINING PROTEIN"/>
    <property type="match status" value="1"/>
</dbReference>
<dbReference type="PANTHER" id="PTHR33284:SF1">
    <property type="entry name" value="RIBOSOMAL PROTEIN L25_GLN-TRNA SYNTHETASE, ANTI-CODON-BINDING DOMAIN-CONTAINING PROTEIN"/>
    <property type="match status" value="1"/>
</dbReference>
<dbReference type="Pfam" id="PF01386">
    <property type="entry name" value="Ribosomal_L25p"/>
    <property type="match status" value="1"/>
</dbReference>
<dbReference type="Pfam" id="PF14693">
    <property type="entry name" value="Ribosomal_TL5_C"/>
    <property type="match status" value="1"/>
</dbReference>
<dbReference type="SUPFAM" id="SSF50715">
    <property type="entry name" value="Ribosomal protein L25-like"/>
    <property type="match status" value="1"/>
</dbReference>
<proteinExistence type="inferred from homology"/>
<reference key="1">
    <citation type="journal article" date="2004" name="J. Bacteriol.">
        <title>Comparative genomics of two Leptospira interrogans serovars reveals novel insights into physiology and pathogenesis.</title>
        <authorList>
            <person name="Nascimento A.L.T.O."/>
            <person name="Ko A.I."/>
            <person name="Martins E.A.L."/>
            <person name="Monteiro-Vitorello C.B."/>
            <person name="Ho P.L."/>
            <person name="Haake D.A."/>
            <person name="Verjovski-Almeida S."/>
            <person name="Hartskeerl R.A."/>
            <person name="Marques M.V."/>
            <person name="Oliveira M.C."/>
            <person name="Menck C.F.M."/>
            <person name="Leite L.C.C."/>
            <person name="Carrer H."/>
            <person name="Coutinho L.L."/>
            <person name="Degrave W.M."/>
            <person name="Dellagostin O.A."/>
            <person name="El-Dorry H."/>
            <person name="Ferro E.S."/>
            <person name="Ferro M.I.T."/>
            <person name="Furlan L.R."/>
            <person name="Gamberini M."/>
            <person name="Giglioti E.A."/>
            <person name="Goes-Neto A."/>
            <person name="Goldman G.H."/>
            <person name="Goldman M.H.S."/>
            <person name="Harakava R."/>
            <person name="Jeronimo S.M.B."/>
            <person name="Junqueira-de-Azevedo I.L.M."/>
            <person name="Kimura E.T."/>
            <person name="Kuramae E.E."/>
            <person name="Lemos E.G.M."/>
            <person name="Lemos M.V.F."/>
            <person name="Marino C.L."/>
            <person name="Nunes L.R."/>
            <person name="de Oliveira R.C."/>
            <person name="Pereira G.G."/>
            <person name="Reis M.S."/>
            <person name="Schriefer A."/>
            <person name="Siqueira W.J."/>
            <person name="Sommer P."/>
            <person name="Tsai S.M."/>
            <person name="Simpson A.J.G."/>
            <person name="Ferro J.A."/>
            <person name="Camargo L.E.A."/>
            <person name="Kitajima J.P."/>
            <person name="Setubal J.C."/>
            <person name="Van Sluys M.A."/>
        </authorList>
    </citation>
    <scope>NUCLEOTIDE SEQUENCE [LARGE SCALE GENOMIC DNA]</scope>
    <source>
        <strain>Fiocruz L1-130</strain>
    </source>
</reference>
<evidence type="ECO:0000255" key="1">
    <source>
        <dbReference type="HAMAP-Rule" id="MF_01334"/>
    </source>
</evidence>
<evidence type="ECO:0000305" key="2"/>